<organism>
    <name type="scientific">Natronomonas pharaonis (strain ATCC 35678 / DSM 2160 / CIP 103997 / JCM 8858 / NBRC 14720 / NCIMB 2260 / Gabara)</name>
    <name type="common">Halobacterium pharaonis</name>
    <dbReference type="NCBI Taxonomy" id="348780"/>
    <lineage>
        <taxon>Archaea</taxon>
        <taxon>Methanobacteriati</taxon>
        <taxon>Methanobacteriota</taxon>
        <taxon>Stenosarchaea group</taxon>
        <taxon>Halobacteria</taxon>
        <taxon>Halobacteriales</taxon>
        <taxon>Haloarculaceae</taxon>
        <taxon>Natronomonas</taxon>
    </lineage>
</organism>
<accession>Q3IQU8</accession>
<keyword id="KW-0030">Aminoacyl-tRNA synthetase</keyword>
<keyword id="KW-0067">ATP-binding</keyword>
<keyword id="KW-0963">Cytoplasm</keyword>
<keyword id="KW-0436">Ligase</keyword>
<keyword id="KW-0547">Nucleotide-binding</keyword>
<keyword id="KW-0648">Protein biosynthesis</keyword>
<keyword id="KW-1185">Reference proteome</keyword>
<sequence>MDTVERTDLVARFTEEVIERDEIETLFEEQDEPTAYIGYAPTGEMHIGHFTTMRKLADFIDAGLDVTVLVADLHAHLDDAKSPFELLEARSEYYERAIEGMIAAAGADPDGISFIRGTDFQLDEPYTLDLYRLLADTTLSRAQRAGSEVVRQSENPSLGSLVYTLMQALDVAALDADIAYGGIDQRGIYMLAREQLPDHGYDKPACVFAPLLSGLSGGKMSASEAGSKINLTDDGEAIDEKIGGAYCPAGETEENGVLEYLEYLVFPVFDQRDTSFVVERPEKYGGDLEYGTYDELEADFVSGELHPADLKPAAAAAIDEVVAPVRELLLEDPELLASAYPERYE</sequence>
<name>SYY_NATPD</name>
<proteinExistence type="inferred from homology"/>
<dbReference type="EC" id="6.1.1.1" evidence="1"/>
<dbReference type="EMBL" id="CR936257">
    <property type="protein sequence ID" value="CAI49496.1"/>
    <property type="molecule type" value="Genomic_DNA"/>
</dbReference>
<dbReference type="RefSeq" id="WP_011323121.1">
    <property type="nucleotide sequence ID" value="NC_007426.1"/>
</dbReference>
<dbReference type="SMR" id="Q3IQU8"/>
<dbReference type="STRING" id="348780.NP_2810A"/>
<dbReference type="EnsemblBacteria" id="CAI49496">
    <property type="protein sequence ID" value="CAI49496"/>
    <property type="gene ID" value="NP_2810A"/>
</dbReference>
<dbReference type="GeneID" id="3703432"/>
<dbReference type="KEGG" id="nph:NP_2810A"/>
<dbReference type="eggNOG" id="arCOG01886">
    <property type="taxonomic scope" value="Archaea"/>
</dbReference>
<dbReference type="HOGENOM" id="CLU_035267_0_1_2"/>
<dbReference type="OrthoDB" id="8389at2157"/>
<dbReference type="Proteomes" id="UP000002698">
    <property type="component" value="Chromosome"/>
</dbReference>
<dbReference type="GO" id="GO:0005737">
    <property type="term" value="C:cytoplasm"/>
    <property type="evidence" value="ECO:0007669"/>
    <property type="project" value="UniProtKB-SubCell"/>
</dbReference>
<dbReference type="GO" id="GO:0005524">
    <property type="term" value="F:ATP binding"/>
    <property type="evidence" value="ECO:0007669"/>
    <property type="project" value="UniProtKB-UniRule"/>
</dbReference>
<dbReference type="GO" id="GO:0004831">
    <property type="term" value="F:tyrosine-tRNA ligase activity"/>
    <property type="evidence" value="ECO:0007669"/>
    <property type="project" value="UniProtKB-UniRule"/>
</dbReference>
<dbReference type="GO" id="GO:0006437">
    <property type="term" value="P:tyrosyl-tRNA aminoacylation"/>
    <property type="evidence" value="ECO:0007669"/>
    <property type="project" value="UniProtKB-UniRule"/>
</dbReference>
<dbReference type="Gene3D" id="3.40.50.620">
    <property type="entry name" value="HUPs"/>
    <property type="match status" value="1"/>
</dbReference>
<dbReference type="Gene3D" id="1.10.240.10">
    <property type="entry name" value="Tyrosyl-Transfer RNA Synthetase"/>
    <property type="match status" value="1"/>
</dbReference>
<dbReference type="HAMAP" id="MF_02008">
    <property type="entry name" value="Tyr_tRNA_synth_type3"/>
    <property type="match status" value="1"/>
</dbReference>
<dbReference type="InterPro" id="IPR001412">
    <property type="entry name" value="aa-tRNA-synth_I_CS"/>
</dbReference>
<dbReference type="InterPro" id="IPR002305">
    <property type="entry name" value="aa-tRNA-synth_Ic"/>
</dbReference>
<dbReference type="InterPro" id="IPR014729">
    <property type="entry name" value="Rossmann-like_a/b/a_fold"/>
</dbReference>
<dbReference type="InterPro" id="IPR002307">
    <property type="entry name" value="Tyr-tRNA-ligase"/>
</dbReference>
<dbReference type="InterPro" id="IPR023684">
    <property type="entry name" value="Tyr-tRNA-ligase_3"/>
</dbReference>
<dbReference type="InterPro" id="IPR023617">
    <property type="entry name" value="Tyr-tRNA-ligase_arc/euk-type"/>
</dbReference>
<dbReference type="InterPro" id="IPR050489">
    <property type="entry name" value="Tyr-tRNA_synthase"/>
</dbReference>
<dbReference type="NCBIfam" id="NF006330">
    <property type="entry name" value="PRK08560.1"/>
    <property type="match status" value="1"/>
</dbReference>
<dbReference type="NCBIfam" id="TIGR00234">
    <property type="entry name" value="tyrS"/>
    <property type="match status" value="1"/>
</dbReference>
<dbReference type="PANTHER" id="PTHR46264:SF4">
    <property type="entry name" value="TYROSINE--TRNA LIGASE, CYTOPLASMIC"/>
    <property type="match status" value="1"/>
</dbReference>
<dbReference type="PANTHER" id="PTHR46264">
    <property type="entry name" value="TYROSINE-TRNA LIGASE"/>
    <property type="match status" value="1"/>
</dbReference>
<dbReference type="Pfam" id="PF00579">
    <property type="entry name" value="tRNA-synt_1b"/>
    <property type="match status" value="1"/>
</dbReference>
<dbReference type="PIRSF" id="PIRSF006588">
    <property type="entry name" value="TyrRS_arch_euk"/>
    <property type="match status" value="1"/>
</dbReference>
<dbReference type="PRINTS" id="PR01040">
    <property type="entry name" value="TRNASYNTHTYR"/>
</dbReference>
<dbReference type="SUPFAM" id="SSF52374">
    <property type="entry name" value="Nucleotidylyl transferase"/>
    <property type="match status" value="1"/>
</dbReference>
<dbReference type="PROSITE" id="PS00178">
    <property type="entry name" value="AA_TRNA_LIGASE_I"/>
    <property type="match status" value="1"/>
</dbReference>
<gene>
    <name evidence="1" type="primary">tyrS</name>
    <name type="ordered locus">NP_2810A</name>
</gene>
<protein>
    <recommendedName>
        <fullName evidence="1">Tyrosine--tRNA ligase</fullName>
        <ecNumber evidence="1">6.1.1.1</ecNumber>
    </recommendedName>
    <alternativeName>
        <fullName evidence="1">Tyrosyl-tRNA synthetase</fullName>
        <shortName evidence="1">TyrRS</shortName>
    </alternativeName>
</protein>
<evidence type="ECO:0000255" key="1">
    <source>
        <dbReference type="HAMAP-Rule" id="MF_02008"/>
    </source>
</evidence>
<comment type="function">
    <text evidence="1">Catalyzes the attachment of tyrosine to tRNA(Tyr) in a two-step reaction: tyrosine is first activated by ATP to form Tyr-AMP and then transferred to the acceptor end of tRNA(Tyr).</text>
</comment>
<comment type="catalytic activity">
    <reaction evidence="1">
        <text>tRNA(Tyr) + L-tyrosine + ATP = L-tyrosyl-tRNA(Tyr) + AMP + diphosphate + H(+)</text>
        <dbReference type="Rhea" id="RHEA:10220"/>
        <dbReference type="Rhea" id="RHEA-COMP:9706"/>
        <dbReference type="Rhea" id="RHEA-COMP:9707"/>
        <dbReference type="ChEBI" id="CHEBI:15378"/>
        <dbReference type="ChEBI" id="CHEBI:30616"/>
        <dbReference type="ChEBI" id="CHEBI:33019"/>
        <dbReference type="ChEBI" id="CHEBI:58315"/>
        <dbReference type="ChEBI" id="CHEBI:78442"/>
        <dbReference type="ChEBI" id="CHEBI:78536"/>
        <dbReference type="ChEBI" id="CHEBI:456215"/>
        <dbReference type="EC" id="6.1.1.1"/>
    </reaction>
</comment>
<comment type="subunit">
    <text evidence="1">Homodimer.</text>
</comment>
<comment type="subcellular location">
    <subcellularLocation>
        <location evidence="1">Cytoplasm</location>
    </subcellularLocation>
</comment>
<comment type="similarity">
    <text evidence="1">Belongs to the class-I aminoacyl-tRNA synthetase family. TyrS type 3 subfamily.</text>
</comment>
<reference key="1">
    <citation type="journal article" date="2005" name="Genome Res.">
        <title>Living with two extremes: conclusions from the genome sequence of Natronomonas pharaonis.</title>
        <authorList>
            <person name="Falb M."/>
            <person name="Pfeiffer F."/>
            <person name="Palm P."/>
            <person name="Rodewald K."/>
            <person name="Hickmann V."/>
            <person name="Tittor J."/>
            <person name="Oesterhelt D."/>
        </authorList>
    </citation>
    <scope>NUCLEOTIDE SEQUENCE [LARGE SCALE GENOMIC DNA]</scope>
    <source>
        <strain>ATCC 35678 / DSM 2160 / CIP 103997 / JCM 8858 / NBRC 14720 / NCIMB 2260 / Gabara</strain>
    </source>
</reference>
<feature type="chain" id="PRO_0000240261" description="Tyrosine--tRNA ligase">
    <location>
        <begin position="1"/>
        <end position="345"/>
    </location>
</feature>
<feature type="short sequence motif" description="'HIGH' region">
    <location>
        <begin position="41"/>
        <end position="49"/>
    </location>
</feature>
<feature type="binding site" evidence="1">
    <location>
        <position position="36"/>
    </location>
    <ligand>
        <name>L-tyrosine</name>
        <dbReference type="ChEBI" id="CHEBI:58315"/>
    </ligand>
</feature>
<feature type="binding site" evidence="1">
    <location>
        <position position="163"/>
    </location>
    <ligand>
        <name>L-tyrosine</name>
        <dbReference type="ChEBI" id="CHEBI:58315"/>
    </ligand>
</feature>
<feature type="binding site" evidence="1">
    <location>
        <position position="167"/>
    </location>
    <ligand>
        <name>L-tyrosine</name>
        <dbReference type="ChEBI" id="CHEBI:58315"/>
    </ligand>
</feature>
<feature type="binding site" evidence="1">
    <location>
        <position position="170"/>
    </location>
    <ligand>
        <name>L-tyrosine</name>
        <dbReference type="ChEBI" id="CHEBI:58315"/>
    </ligand>
</feature>
<feature type="binding site" evidence="1">
    <location>
        <position position="185"/>
    </location>
    <ligand>
        <name>L-tyrosine</name>
        <dbReference type="ChEBI" id="CHEBI:58315"/>
    </ligand>
</feature>